<name>MIAB_LEGPC</name>
<proteinExistence type="inferred from homology"/>
<comment type="function">
    <text evidence="1">Catalyzes the methylthiolation of N6-(dimethylallyl)adenosine (i(6)A), leading to the formation of 2-methylthio-N6-(dimethylallyl)adenosine (ms(2)i(6)A) at position 37 in tRNAs that read codons beginning with uridine.</text>
</comment>
<comment type="catalytic activity">
    <reaction evidence="1">
        <text>N(6)-dimethylallyladenosine(37) in tRNA + (sulfur carrier)-SH + AH2 + 2 S-adenosyl-L-methionine = 2-methylsulfanyl-N(6)-dimethylallyladenosine(37) in tRNA + (sulfur carrier)-H + 5'-deoxyadenosine + L-methionine + A + S-adenosyl-L-homocysteine + 2 H(+)</text>
        <dbReference type="Rhea" id="RHEA:37067"/>
        <dbReference type="Rhea" id="RHEA-COMP:10375"/>
        <dbReference type="Rhea" id="RHEA-COMP:10376"/>
        <dbReference type="Rhea" id="RHEA-COMP:14737"/>
        <dbReference type="Rhea" id="RHEA-COMP:14739"/>
        <dbReference type="ChEBI" id="CHEBI:13193"/>
        <dbReference type="ChEBI" id="CHEBI:15378"/>
        <dbReference type="ChEBI" id="CHEBI:17319"/>
        <dbReference type="ChEBI" id="CHEBI:17499"/>
        <dbReference type="ChEBI" id="CHEBI:29917"/>
        <dbReference type="ChEBI" id="CHEBI:57844"/>
        <dbReference type="ChEBI" id="CHEBI:57856"/>
        <dbReference type="ChEBI" id="CHEBI:59789"/>
        <dbReference type="ChEBI" id="CHEBI:64428"/>
        <dbReference type="ChEBI" id="CHEBI:74415"/>
        <dbReference type="ChEBI" id="CHEBI:74417"/>
        <dbReference type="EC" id="2.8.4.3"/>
    </reaction>
</comment>
<comment type="cofactor">
    <cofactor evidence="1">
        <name>[4Fe-4S] cluster</name>
        <dbReference type="ChEBI" id="CHEBI:49883"/>
    </cofactor>
    <text evidence="1">Binds 2 [4Fe-4S] clusters. One cluster is coordinated with 3 cysteines and an exchangeable S-adenosyl-L-methionine.</text>
</comment>
<comment type="subunit">
    <text evidence="1">Monomer.</text>
</comment>
<comment type="subcellular location">
    <subcellularLocation>
        <location evidence="1">Cytoplasm</location>
    </subcellularLocation>
</comment>
<comment type="similarity">
    <text evidence="1">Belongs to the methylthiotransferase family. MiaB subfamily.</text>
</comment>
<dbReference type="EC" id="2.8.4.3" evidence="1"/>
<dbReference type="EMBL" id="CP000675">
    <property type="protein sequence ID" value="ABQ54727.1"/>
    <property type="molecule type" value="Genomic_DNA"/>
</dbReference>
<dbReference type="RefSeq" id="WP_010947064.1">
    <property type="nucleotide sequence ID" value="NZ_JAPMSS010000002.1"/>
</dbReference>
<dbReference type="SMR" id="A5IBH7"/>
<dbReference type="GeneID" id="57035324"/>
<dbReference type="KEGG" id="lpc:LPC_0750"/>
<dbReference type="HOGENOM" id="CLU_018697_2_0_6"/>
<dbReference type="GO" id="GO:0005829">
    <property type="term" value="C:cytosol"/>
    <property type="evidence" value="ECO:0007669"/>
    <property type="project" value="TreeGrafter"/>
</dbReference>
<dbReference type="GO" id="GO:0051539">
    <property type="term" value="F:4 iron, 4 sulfur cluster binding"/>
    <property type="evidence" value="ECO:0007669"/>
    <property type="project" value="UniProtKB-UniRule"/>
</dbReference>
<dbReference type="GO" id="GO:0046872">
    <property type="term" value="F:metal ion binding"/>
    <property type="evidence" value="ECO:0007669"/>
    <property type="project" value="UniProtKB-KW"/>
</dbReference>
<dbReference type="GO" id="GO:0035597">
    <property type="term" value="F:N6-isopentenyladenosine methylthiotransferase activity"/>
    <property type="evidence" value="ECO:0007669"/>
    <property type="project" value="TreeGrafter"/>
</dbReference>
<dbReference type="CDD" id="cd01335">
    <property type="entry name" value="Radical_SAM"/>
    <property type="match status" value="1"/>
</dbReference>
<dbReference type="FunFam" id="3.40.50.12160:FF:000001">
    <property type="entry name" value="tRNA-2-methylthio-N(6)-dimethylallyladenosine synthase"/>
    <property type="match status" value="1"/>
</dbReference>
<dbReference type="FunFam" id="3.80.30.20:FF:000001">
    <property type="entry name" value="tRNA-2-methylthio-N(6)-dimethylallyladenosine synthase 2"/>
    <property type="match status" value="1"/>
</dbReference>
<dbReference type="Gene3D" id="3.40.50.12160">
    <property type="entry name" value="Methylthiotransferase, N-terminal domain"/>
    <property type="match status" value="1"/>
</dbReference>
<dbReference type="Gene3D" id="3.80.30.20">
    <property type="entry name" value="tm_1862 like domain"/>
    <property type="match status" value="1"/>
</dbReference>
<dbReference type="HAMAP" id="MF_01864">
    <property type="entry name" value="tRNA_metthiotr_MiaB"/>
    <property type="match status" value="1"/>
</dbReference>
<dbReference type="InterPro" id="IPR006638">
    <property type="entry name" value="Elp3/MiaA/NifB-like_rSAM"/>
</dbReference>
<dbReference type="InterPro" id="IPR005839">
    <property type="entry name" value="Methylthiotransferase"/>
</dbReference>
<dbReference type="InterPro" id="IPR020612">
    <property type="entry name" value="Methylthiotransferase_CS"/>
</dbReference>
<dbReference type="InterPro" id="IPR013848">
    <property type="entry name" value="Methylthiotransferase_N"/>
</dbReference>
<dbReference type="InterPro" id="IPR038135">
    <property type="entry name" value="Methylthiotransferase_N_sf"/>
</dbReference>
<dbReference type="InterPro" id="IPR006463">
    <property type="entry name" value="MiaB_methiolase"/>
</dbReference>
<dbReference type="InterPro" id="IPR007197">
    <property type="entry name" value="rSAM"/>
</dbReference>
<dbReference type="InterPro" id="IPR023404">
    <property type="entry name" value="rSAM_horseshoe"/>
</dbReference>
<dbReference type="InterPro" id="IPR002792">
    <property type="entry name" value="TRAM_dom"/>
</dbReference>
<dbReference type="NCBIfam" id="TIGR01574">
    <property type="entry name" value="miaB-methiolase"/>
    <property type="match status" value="1"/>
</dbReference>
<dbReference type="NCBIfam" id="TIGR00089">
    <property type="entry name" value="MiaB/RimO family radical SAM methylthiotransferase"/>
    <property type="match status" value="1"/>
</dbReference>
<dbReference type="PANTHER" id="PTHR43020">
    <property type="entry name" value="CDK5 REGULATORY SUBUNIT-ASSOCIATED PROTEIN 1"/>
    <property type="match status" value="1"/>
</dbReference>
<dbReference type="PANTHER" id="PTHR43020:SF2">
    <property type="entry name" value="MITOCHONDRIAL TRNA METHYLTHIOTRANSFERASE CDK5RAP1"/>
    <property type="match status" value="1"/>
</dbReference>
<dbReference type="Pfam" id="PF04055">
    <property type="entry name" value="Radical_SAM"/>
    <property type="match status" value="1"/>
</dbReference>
<dbReference type="Pfam" id="PF01938">
    <property type="entry name" value="TRAM"/>
    <property type="match status" value="1"/>
</dbReference>
<dbReference type="Pfam" id="PF00919">
    <property type="entry name" value="UPF0004"/>
    <property type="match status" value="1"/>
</dbReference>
<dbReference type="SFLD" id="SFLDF00273">
    <property type="entry name" value="(dimethylallyl)adenosine_tRNA"/>
    <property type="match status" value="1"/>
</dbReference>
<dbReference type="SFLD" id="SFLDG01082">
    <property type="entry name" value="B12-binding_domain_containing"/>
    <property type="match status" value="1"/>
</dbReference>
<dbReference type="SFLD" id="SFLDG01061">
    <property type="entry name" value="methylthiotransferase"/>
    <property type="match status" value="1"/>
</dbReference>
<dbReference type="SMART" id="SM00729">
    <property type="entry name" value="Elp3"/>
    <property type="match status" value="1"/>
</dbReference>
<dbReference type="SUPFAM" id="SSF102114">
    <property type="entry name" value="Radical SAM enzymes"/>
    <property type="match status" value="1"/>
</dbReference>
<dbReference type="PROSITE" id="PS51449">
    <property type="entry name" value="MTTASE_N"/>
    <property type="match status" value="1"/>
</dbReference>
<dbReference type="PROSITE" id="PS01278">
    <property type="entry name" value="MTTASE_RADICAL"/>
    <property type="match status" value="1"/>
</dbReference>
<dbReference type="PROSITE" id="PS51918">
    <property type="entry name" value="RADICAL_SAM"/>
    <property type="match status" value="1"/>
</dbReference>
<dbReference type="PROSITE" id="PS50926">
    <property type="entry name" value="TRAM"/>
    <property type="match status" value="1"/>
</dbReference>
<gene>
    <name evidence="1" type="primary">miaB</name>
    <name type="ordered locus">LPC_0750</name>
</gene>
<evidence type="ECO:0000255" key="1">
    <source>
        <dbReference type="HAMAP-Rule" id="MF_01864"/>
    </source>
</evidence>
<evidence type="ECO:0000255" key="2">
    <source>
        <dbReference type="PROSITE-ProRule" id="PRU01266"/>
    </source>
</evidence>
<sequence>MVKKLYIKTNGCQMNEYDSSKMAEVLYASHGLVKTDQVEDADVILLNTCSIREKAQEKVFSQLGQWREYKAKNPHVLIGVGGCVASQEGSDIIKRAPFVDIVFGPQTLHRLPALLNERLEKNKSVVDISFPEIEKFDHLPAPRAEGPTAFVSIMEGCSKYCSFCVVPYTRGEEISRPFDDVLAECYQLASQGVREINLLGQNVNDYRGIMDNGDIADLALLIHYIAAIDGIGRIRFTTSHPLAFSENLINAYAEVPELANHLHLPVQSGSDRILSLMKRGYTALEFKSKIRKLRKIRPDIRLSTDIIVGFPGETDKDFQDTMDLVHEIGFDTSFSFIYSPRPGTPAANLPDDTPMEIKKQRLQILQNRLLMNAARYSESMIGSKQKILVTGFSKKSSQQLSGRTECNRVVNFDGPPHLIGQFIDVQISDALPNSLRGRLLEKEMQPA</sequence>
<protein>
    <recommendedName>
        <fullName evidence="1">tRNA-2-methylthio-N(6)-dimethylallyladenosine synthase</fullName>
        <ecNumber evidence="1">2.8.4.3</ecNumber>
    </recommendedName>
    <alternativeName>
        <fullName evidence="1">(Dimethylallyl)adenosine tRNA methylthiotransferase MiaB</fullName>
    </alternativeName>
    <alternativeName>
        <fullName evidence="1">tRNA-i(6)A37 methylthiotransferase</fullName>
    </alternativeName>
</protein>
<organism>
    <name type="scientific">Legionella pneumophila (strain Corby)</name>
    <dbReference type="NCBI Taxonomy" id="400673"/>
    <lineage>
        <taxon>Bacteria</taxon>
        <taxon>Pseudomonadati</taxon>
        <taxon>Pseudomonadota</taxon>
        <taxon>Gammaproteobacteria</taxon>
        <taxon>Legionellales</taxon>
        <taxon>Legionellaceae</taxon>
        <taxon>Legionella</taxon>
    </lineage>
</organism>
<keyword id="KW-0004">4Fe-4S</keyword>
<keyword id="KW-0963">Cytoplasm</keyword>
<keyword id="KW-0408">Iron</keyword>
<keyword id="KW-0411">Iron-sulfur</keyword>
<keyword id="KW-0479">Metal-binding</keyword>
<keyword id="KW-0949">S-adenosyl-L-methionine</keyword>
<keyword id="KW-0808">Transferase</keyword>
<keyword id="KW-0819">tRNA processing</keyword>
<feature type="chain" id="PRO_0000374353" description="tRNA-2-methylthio-N(6)-dimethylallyladenosine synthase">
    <location>
        <begin position="1"/>
        <end position="447"/>
    </location>
</feature>
<feature type="domain" description="MTTase N-terminal" evidence="1">
    <location>
        <begin position="3"/>
        <end position="120"/>
    </location>
</feature>
<feature type="domain" description="Radical SAM core" evidence="2">
    <location>
        <begin position="143"/>
        <end position="375"/>
    </location>
</feature>
<feature type="domain" description="TRAM" evidence="1">
    <location>
        <begin position="378"/>
        <end position="441"/>
    </location>
</feature>
<feature type="binding site" evidence="1">
    <location>
        <position position="12"/>
    </location>
    <ligand>
        <name>[4Fe-4S] cluster</name>
        <dbReference type="ChEBI" id="CHEBI:49883"/>
        <label>1</label>
    </ligand>
</feature>
<feature type="binding site" evidence="1">
    <location>
        <position position="49"/>
    </location>
    <ligand>
        <name>[4Fe-4S] cluster</name>
        <dbReference type="ChEBI" id="CHEBI:49883"/>
        <label>1</label>
    </ligand>
</feature>
<feature type="binding site" evidence="1">
    <location>
        <position position="83"/>
    </location>
    <ligand>
        <name>[4Fe-4S] cluster</name>
        <dbReference type="ChEBI" id="CHEBI:49883"/>
        <label>1</label>
    </ligand>
</feature>
<feature type="binding site" evidence="1">
    <location>
        <position position="157"/>
    </location>
    <ligand>
        <name>[4Fe-4S] cluster</name>
        <dbReference type="ChEBI" id="CHEBI:49883"/>
        <label>2</label>
        <note>4Fe-4S-S-AdoMet</note>
    </ligand>
</feature>
<feature type="binding site" evidence="1">
    <location>
        <position position="161"/>
    </location>
    <ligand>
        <name>[4Fe-4S] cluster</name>
        <dbReference type="ChEBI" id="CHEBI:49883"/>
        <label>2</label>
        <note>4Fe-4S-S-AdoMet</note>
    </ligand>
</feature>
<feature type="binding site" evidence="1">
    <location>
        <position position="164"/>
    </location>
    <ligand>
        <name>[4Fe-4S] cluster</name>
        <dbReference type="ChEBI" id="CHEBI:49883"/>
        <label>2</label>
        <note>4Fe-4S-S-AdoMet</note>
    </ligand>
</feature>
<reference key="1">
    <citation type="submission" date="2006-11" db="EMBL/GenBank/DDBJ databases">
        <title>Identification and characterization of a new conjugation/ type IVA secretion system (trb/tra) of L. pneumophila Corby localized on a mobile genomic island.</title>
        <authorList>
            <person name="Gloeckner G."/>
            <person name="Albert-Weissenberger C."/>
            <person name="Weinmann E."/>
            <person name="Jacobi S."/>
            <person name="Schunder E."/>
            <person name="Steinert M."/>
            <person name="Buchrieser C."/>
            <person name="Hacker J."/>
            <person name="Heuner K."/>
        </authorList>
    </citation>
    <scope>NUCLEOTIDE SEQUENCE [LARGE SCALE GENOMIC DNA]</scope>
    <source>
        <strain>Corby</strain>
    </source>
</reference>
<accession>A5IBH7</accession>